<feature type="chain" id="PRO_1000067748" description="NADH-quinone oxidoreductase subunit H">
    <location>
        <begin position="1"/>
        <end position="340"/>
    </location>
</feature>
<feature type="transmembrane region" description="Helical" evidence="1">
    <location>
        <begin position="4"/>
        <end position="24"/>
    </location>
</feature>
<feature type="transmembrane region" description="Helical" evidence="1">
    <location>
        <begin position="78"/>
        <end position="98"/>
    </location>
</feature>
<feature type="transmembrane region" description="Helical" evidence="1">
    <location>
        <begin position="113"/>
        <end position="133"/>
    </location>
</feature>
<feature type="transmembrane region" description="Helical" evidence="1">
    <location>
        <begin position="151"/>
        <end position="171"/>
    </location>
</feature>
<feature type="transmembrane region" description="Helical" evidence="1">
    <location>
        <begin position="184"/>
        <end position="204"/>
    </location>
</feature>
<feature type="transmembrane region" description="Helical" evidence="1">
    <location>
        <begin position="244"/>
        <end position="264"/>
    </location>
</feature>
<feature type="transmembrane region" description="Helical" evidence="1">
    <location>
        <begin position="273"/>
        <end position="293"/>
    </location>
</feature>
<feature type="transmembrane region" description="Helical" evidence="1">
    <location>
        <begin position="316"/>
        <end position="336"/>
    </location>
</feature>
<name>NUOH_LEGPC</name>
<gene>
    <name evidence="1" type="primary">nuoH</name>
    <name type="ordered locus">LPC_3068</name>
</gene>
<reference key="1">
    <citation type="submission" date="2006-11" db="EMBL/GenBank/DDBJ databases">
        <title>Identification and characterization of a new conjugation/ type IVA secretion system (trb/tra) of L. pneumophila Corby localized on a mobile genomic island.</title>
        <authorList>
            <person name="Gloeckner G."/>
            <person name="Albert-Weissenberger C."/>
            <person name="Weinmann E."/>
            <person name="Jacobi S."/>
            <person name="Schunder E."/>
            <person name="Steinert M."/>
            <person name="Buchrieser C."/>
            <person name="Hacker J."/>
            <person name="Heuner K."/>
        </authorList>
    </citation>
    <scope>NUCLEOTIDE SEQUENCE [LARGE SCALE GENOMIC DNA]</scope>
    <source>
        <strain>Corby</strain>
    </source>
</reference>
<dbReference type="EC" id="7.1.1.-" evidence="1"/>
<dbReference type="EMBL" id="CP000675">
    <property type="protein sequence ID" value="ABQ56956.1"/>
    <property type="molecule type" value="Genomic_DNA"/>
</dbReference>
<dbReference type="RefSeq" id="WP_011947671.1">
    <property type="nucleotide sequence ID" value="NC_009494.2"/>
</dbReference>
<dbReference type="SMR" id="A5IHV6"/>
<dbReference type="KEGG" id="lpc:LPC_3068"/>
<dbReference type="HOGENOM" id="CLU_015134_0_1_6"/>
<dbReference type="GO" id="GO:0005886">
    <property type="term" value="C:plasma membrane"/>
    <property type="evidence" value="ECO:0007669"/>
    <property type="project" value="UniProtKB-SubCell"/>
</dbReference>
<dbReference type="GO" id="GO:0003954">
    <property type="term" value="F:NADH dehydrogenase activity"/>
    <property type="evidence" value="ECO:0007669"/>
    <property type="project" value="TreeGrafter"/>
</dbReference>
<dbReference type="GO" id="GO:0016655">
    <property type="term" value="F:oxidoreductase activity, acting on NAD(P)H, quinone or similar compound as acceptor"/>
    <property type="evidence" value="ECO:0007669"/>
    <property type="project" value="UniProtKB-UniRule"/>
</dbReference>
<dbReference type="GO" id="GO:0048038">
    <property type="term" value="F:quinone binding"/>
    <property type="evidence" value="ECO:0007669"/>
    <property type="project" value="UniProtKB-KW"/>
</dbReference>
<dbReference type="GO" id="GO:0009060">
    <property type="term" value="P:aerobic respiration"/>
    <property type="evidence" value="ECO:0007669"/>
    <property type="project" value="TreeGrafter"/>
</dbReference>
<dbReference type="HAMAP" id="MF_01350">
    <property type="entry name" value="NDH1_NuoH"/>
    <property type="match status" value="1"/>
</dbReference>
<dbReference type="InterPro" id="IPR001694">
    <property type="entry name" value="NADH_UbQ_OxRdtase_su1/FPO"/>
</dbReference>
<dbReference type="InterPro" id="IPR018086">
    <property type="entry name" value="NADH_UbQ_OxRdtase_su1_CS"/>
</dbReference>
<dbReference type="NCBIfam" id="NF004741">
    <property type="entry name" value="PRK06076.1-2"/>
    <property type="match status" value="1"/>
</dbReference>
<dbReference type="PANTHER" id="PTHR11432">
    <property type="entry name" value="NADH DEHYDROGENASE SUBUNIT 1"/>
    <property type="match status" value="1"/>
</dbReference>
<dbReference type="PANTHER" id="PTHR11432:SF3">
    <property type="entry name" value="NADH-UBIQUINONE OXIDOREDUCTASE CHAIN 1"/>
    <property type="match status" value="1"/>
</dbReference>
<dbReference type="Pfam" id="PF00146">
    <property type="entry name" value="NADHdh"/>
    <property type="match status" value="1"/>
</dbReference>
<dbReference type="PROSITE" id="PS00668">
    <property type="entry name" value="COMPLEX1_ND1_2"/>
    <property type="match status" value="1"/>
</dbReference>
<keyword id="KW-0997">Cell inner membrane</keyword>
<keyword id="KW-1003">Cell membrane</keyword>
<keyword id="KW-0472">Membrane</keyword>
<keyword id="KW-0520">NAD</keyword>
<keyword id="KW-0874">Quinone</keyword>
<keyword id="KW-1278">Translocase</keyword>
<keyword id="KW-0812">Transmembrane</keyword>
<keyword id="KW-1133">Transmembrane helix</keyword>
<keyword id="KW-0830">Ubiquinone</keyword>
<accession>A5IHV6</accession>
<comment type="function">
    <text evidence="1">NDH-1 shuttles electrons from NADH, via FMN and iron-sulfur (Fe-S) centers, to quinones in the respiratory chain. The immediate electron acceptor for the enzyme in this species is believed to be ubiquinone. Couples the redox reaction to proton translocation (for every two electrons transferred, four hydrogen ions are translocated across the cytoplasmic membrane), and thus conserves the redox energy in a proton gradient. This subunit may bind ubiquinone.</text>
</comment>
<comment type="catalytic activity">
    <reaction evidence="1">
        <text>a quinone + NADH + 5 H(+)(in) = a quinol + NAD(+) + 4 H(+)(out)</text>
        <dbReference type="Rhea" id="RHEA:57888"/>
        <dbReference type="ChEBI" id="CHEBI:15378"/>
        <dbReference type="ChEBI" id="CHEBI:24646"/>
        <dbReference type="ChEBI" id="CHEBI:57540"/>
        <dbReference type="ChEBI" id="CHEBI:57945"/>
        <dbReference type="ChEBI" id="CHEBI:132124"/>
    </reaction>
</comment>
<comment type="subunit">
    <text evidence="1">NDH-1 is composed of 14 different subunits. Subunits NuoA, H, J, K, L, M, N constitute the membrane sector of the complex.</text>
</comment>
<comment type="subcellular location">
    <subcellularLocation>
        <location evidence="1">Cell inner membrane</location>
        <topology evidence="1">Multi-pass membrane protein</topology>
    </subcellularLocation>
</comment>
<comment type="similarity">
    <text evidence="1">Belongs to the complex I subunit 1 family.</text>
</comment>
<protein>
    <recommendedName>
        <fullName evidence="1">NADH-quinone oxidoreductase subunit H</fullName>
        <ecNumber evidence="1">7.1.1.-</ecNumber>
    </recommendedName>
    <alternativeName>
        <fullName evidence="1">NADH dehydrogenase I subunit H</fullName>
    </alternativeName>
    <alternativeName>
        <fullName evidence="1">NDH-1 subunit H</fullName>
    </alternativeName>
</protein>
<evidence type="ECO:0000255" key="1">
    <source>
        <dbReference type="HAMAP-Rule" id="MF_01350"/>
    </source>
</evidence>
<sequence>MLHTIGILIWIIIKILVIVVPLLISVAYLTYAERKVIGYIQVRIGPNRVGLKGLLQPFADLLKLITKEIIVPTRSNKYLFVIAPLFALVPSLVGWAVIPFQEGVVLANINAGVLYLFAMSSLGVYGVLIAGWASNSKYAMFGALRSTAQTVSYEIAMGFALVGVLLAAGSMNLTDIVNSQKGGMLHWWFIPLLPLFLVFWIAGIAETNRAPFDLAEGESEIVAGFHVEYSGIGFALFFLSEYASMILISTFMAILFMGGWLSPFEGITFLDQIFFVVPGFVWLLLKISFFLFVYLWVRATFPRYRYDQLMRLGWKVLIPVTIVWLIVTSLMVVAHVKPWF</sequence>
<organism>
    <name type="scientific">Legionella pneumophila (strain Corby)</name>
    <dbReference type="NCBI Taxonomy" id="400673"/>
    <lineage>
        <taxon>Bacteria</taxon>
        <taxon>Pseudomonadati</taxon>
        <taxon>Pseudomonadota</taxon>
        <taxon>Gammaproteobacteria</taxon>
        <taxon>Legionellales</taxon>
        <taxon>Legionellaceae</taxon>
        <taxon>Legionella</taxon>
    </lineage>
</organism>
<proteinExistence type="inferred from homology"/>